<evidence type="ECO:0000255" key="1">
    <source>
        <dbReference type="HAMAP-Rule" id="MF_00175"/>
    </source>
</evidence>
<evidence type="ECO:0000255" key="2">
    <source>
        <dbReference type="PROSITE-ProRule" id="PRU01250"/>
    </source>
</evidence>
<evidence type="ECO:0000256" key="3">
    <source>
        <dbReference type="SAM" id="MobiDB-lite"/>
    </source>
</evidence>
<evidence type="ECO:0007829" key="4">
    <source>
        <dbReference type="PDB" id="6VFX"/>
    </source>
</evidence>
<keyword id="KW-0002">3D-structure</keyword>
<keyword id="KW-0067">ATP-binding</keyword>
<keyword id="KW-0143">Chaperone</keyword>
<keyword id="KW-0479">Metal-binding</keyword>
<keyword id="KW-0547">Nucleotide-binding</keyword>
<keyword id="KW-1185">Reference proteome</keyword>
<keyword id="KW-0862">Zinc</keyword>
<reference key="1">
    <citation type="journal article" date="2000" name="Science">
        <title>Complete genome sequence of Neisseria meningitidis serogroup B strain MC58.</title>
        <authorList>
            <person name="Tettelin H."/>
            <person name="Saunders N.J."/>
            <person name="Heidelberg J.F."/>
            <person name="Jeffries A.C."/>
            <person name="Nelson K.E."/>
            <person name="Eisen J.A."/>
            <person name="Ketchum K.A."/>
            <person name="Hood D.W."/>
            <person name="Peden J.F."/>
            <person name="Dodson R.J."/>
            <person name="Nelson W.C."/>
            <person name="Gwinn M.L."/>
            <person name="DeBoy R.T."/>
            <person name="Peterson J.D."/>
            <person name="Hickey E.K."/>
            <person name="Haft D.H."/>
            <person name="Salzberg S.L."/>
            <person name="White O."/>
            <person name="Fleischmann R.D."/>
            <person name="Dougherty B.A."/>
            <person name="Mason T.M."/>
            <person name="Ciecko A."/>
            <person name="Parksey D.S."/>
            <person name="Blair E."/>
            <person name="Cittone H."/>
            <person name="Clark E.B."/>
            <person name="Cotton M.D."/>
            <person name="Utterback T.R."/>
            <person name="Khouri H.M."/>
            <person name="Qin H."/>
            <person name="Vamathevan J.J."/>
            <person name="Gill J."/>
            <person name="Scarlato V."/>
            <person name="Masignani V."/>
            <person name="Pizza M."/>
            <person name="Grandi G."/>
            <person name="Sun L."/>
            <person name="Smith H.O."/>
            <person name="Fraser C.M."/>
            <person name="Moxon E.R."/>
            <person name="Rappuoli R."/>
            <person name="Venter J.C."/>
        </authorList>
    </citation>
    <scope>NUCLEOTIDE SEQUENCE [LARGE SCALE GENOMIC DNA]</scope>
    <source>
        <strain>ATCC BAA-335 / MC58</strain>
    </source>
</reference>
<accession>Q9JYY3</accession>
<feature type="chain" id="PRO_0000160391" description="ATP-dependent Clp protease ATP-binding subunit ClpX">
    <location>
        <begin position="1"/>
        <end position="414"/>
    </location>
</feature>
<feature type="domain" description="ClpX-type ZB" evidence="2">
    <location>
        <begin position="1"/>
        <end position="49"/>
    </location>
</feature>
<feature type="region of interest" description="Disordered" evidence="3">
    <location>
        <begin position="44"/>
        <end position="65"/>
    </location>
</feature>
<feature type="binding site" evidence="2">
    <location>
        <position position="8"/>
    </location>
    <ligand>
        <name>Zn(2+)</name>
        <dbReference type="ChEBI" id="CHEBI:29105"/>
    </ligand>
</feature>
<feature type="binding site" evidence="2">
    <location>
        <position position="11"/>
    </location>
    <ligand>
        <name>Zn(2+)</name>
        <dbReference type="ChEBI" id="CHEBI:29105"/>
    </ligand>
</feature>
<feature type="binding site" evidence="2">
    <location>
        <position position="30"/>
    </location>
    <ligand>
        <name>Zn(2+)</name>
        <dbReference type="ChEBI" id="CHEBI:29105"/>
    </ligand>
</feature>
<feature type="binding site" evidence="2">
    <location>
        <position position="33"/>
    </location>
    <ligand>
        <name>Zn(2+)</name>
        <dbReference type="ChEBI" id="CHEBI:29105"/>
    </ligand>
</feature>
<feature type="binding site" evidence="1">
    <location>
        <begin position="120"/>
        <end position="127"/>
    </location>
    <ligand>
        <name>ATP</name>
        <dbReference type="ChEBI" id="CHEBI:30616"/>
    </ligand>
</feature>
<feature type="helix" evidence="4">
    <location>
        <begin position="67"/>
        <end position="75"/>
    </location>
</feature>
<feature type="helix" evidence="4">
    <location>
        <begin position="82"/>
        <end position="99"/>
    </location>
</feature>
<feature type="turn" evidence="4">
    <location>
        <begin position="103"/>
        <end position="105"/>
    </location>
</feature>
<feature type="strand" evidence="4">
    <location>
        <begin position="115"/>
        <end position="118"/>
    </location>
</feature>
<feature type="helix" evidence="4">
    <location>
        <begin position="125"/>
        <end position="132"/>
    </location>
</feature>
<feature type="helix" evidence="4">
    <location>
        <begin position="133"/>
        <end position="135"/>
    </location>
</feature>
<feature type="strand" evidence="4">
    <location>
        <begin position="140"/>
        <end position="144"/>
    </location>
</feature>
<feature type="helix" evidence="4">
    <location>
        <begin position="145"/>
        <end position="147"/>
    </location>
</feature>
<feature type="strand" evidence="4">
    <location>
        <begin position="153"/>
        <end position="156"/>
    </location>
</feature>
<feature type="helix" evidence="4">
    <location>
        <begin position="160"/>
        <end position="167"/>
    </location>
</feature>
<feature type="turn" evidence="4">
    <location>
        <begin position="168"/>
        <end position="171"/>
    </location>
</feature>
<feature type="helix" evidence="4">
    <location>
        <begin position="173"/>
        <end position="176"/>
    </location>
</feature>
<feature type="strand" evidence="4">
    <location>
        <begin position="180"/>
        <end position="184"/>
    </location>
</feature>
<feature type="helix" evidence="4">
    <location>
        <begin position="186"/>
        <end position="189"/>
    </location>
</feature>
<feature type="turn" evidence="4">
    <location>
        <begin position="202"/>
        <end position="204"/>
    </location>
</feature>
<feature type="helix" evidence="4">
    <location>
        <begin position="205"/>
        <end position="215"/>
    </location>
</feature>
<feature type="strand" evidence="4">
    <location>
        <begin position="219"/>
        <end position="222"/>
    </location>
</feature>
<feature type="strand" evidence="4">
    <location>
        <begin position="236"/>
        <end position="239"/>
    </location>
</feature>
<feature type="strand" evidence="4">
    <location>
        <begin position="244"/>
        <end position="249"/>
    </location>
</feature>
<feature type="helix" evidence="4">
    <location>
        <begin position="254"/>
        <end position="262"/>
    </location>
</feature>
<feature type="strand" evidence="4">
    <location>
        <begin position="266"/>
        <end position="268"/>
    </location>
</feature>
<feature type="helix" evidence="4">
    <location>
        <begin position="282"/>
        <end position="286"/>
    </location>
</feature>
<feature type="helix" evidence="4">
    <location>
        <begin position="291"/>
        <end position="297"/>
    </location>
</feature>
<feature type="helix" evidence="4">
    <location>
        <begin position="301"/>
        <end position="305"/>
    </location>
</feature>
<feature type="strand" evidence="4">
    <location>
        <begin position="309"/>
        <end position="312"/>
    </location>
</feature>
<feature type="helix" evidence="4">
    <location>
        <begin position="320"/>
        <end position="326"/>
    </location>
</feature>
<feature type="helix" evidence="4">
    <location>
        <begin position="332"/>
        <end position="342"/>
    </location>
</feature>
<feature type="strand" evidence="4">
    <location>
        <begin position="346"/>
        <end position="349"/>
    </location>
</feature>
<feature type="helix" evidence="4">
    <location>
        <begin position="351"/>
        <end position="362"/>
    </location>
</feature>
<feature type="turn" evidence="4">
    <location>
        <begin position="363"/>
        <end position="365"/>
    </location>
</feature>
<feature type="helix" evidence="4">
    <location>
        <begin position="369"/>
        <end position="385"/>
    </location>
</feature>
<feature type="turn" evidence="4">
    <location>
        <begin position="386"/>
        <end position="388"/>
    </location>
</feature>
<feature type="strand" evidence="4">
    <location>
        <begin position="394"/>
        <end position="397"/>
    </location>
</feature>
<feature type="helix" evidence="4">
    <location>
        <begin position="399"/>
        <end position="403"/>
    </location>
</feature>
<feature type="strand" evidence="4">
    <location>
        <begin position="409"/>
        <end position="411"/>
    </location>
</feature>
<dbReference type="EMBL" id="AE002098">
    <property type="protein sequence ID" value="AAF41746.1"/>
    <property type="molecule type" value="Genomic_DNA"/>
</dbReference>
<dbReference type="PIR" id="A81091">
    <property type="entry name" value="A81091"/>
</dbReference>
<dbReference type="RefSeq" id="NP_274390.1">
    <property type="nucleotide sequence ID" value="NC_003112.2"/>
</dbReference>
<dbReference type="RefSeq" id="WP_002222327.1">
    <property type="nucleotide sequence ID" value="NC_003112.2"/>
</dbReference>
<dbReference type="PDB" id="6VFS">
    <property type="method" value="EM"/>
    <property type="resolution" value="3.30 A"/>
    <property type="chains" value="A/B/C/D/E/F=1-414"/>
</dbReference>
<dbReference type="PDB" id="6VFX">
    <property type="method" value="EM"/>
    <property type="resolution" value="2.90 A"/>
    <property type="chains" value="A/B/C/D/E/F=1-414"/>
</dbReference>
<dbReference type="PDBsum" id="6VFS"/>
<dbReference type="PDBsum" id="6VFX"/>
<dbReference type="SMR" id="Q9JYY3"/>
<dbReference type="FunCoup" id="Q9JYY3">
    <property type="interactions" value="384"/>
</dbReference>
<dbReference type="STRING" id="122586.NMB1372"/>
<dbReference type="PaxDb" id="122586-NMB1372"/>
<dbReference type="KEGG" id="nme:NMB1372"/>
<dbReference type="PATRIC" id="fig|122586.8.peg.1719"/>
<dbReference type="HOGENOM" id="CLU_014218_8_2_4"/>
<dbReference type="InParanoid" id="Q9JYY3"/>
<dbReference type="OrthoDB" id="9804062at2"/>
<dbReference type="Proteomes" id="UP000000425">
    <property type="component" value="Chromosome"/>
</dbReference>
<dbReference type="GO" id="GO:0009376">
    <property type="term" value="C:HslUV protease complex"/>
    <property type="evidence" value="ECO:0000318"/>
    <property type="project" value="GO_Central"/>
</dbReference>
<dbReference type="GO" id="GO:0005524">
    <property type="term" value="F:ATP binding"/>
    <property type="evidence" value="ECO:0000318"/>
    <property type="project" value="GO_Central"/>
</dbReference>
<dbReference type="GO" id="GO:0016887">
    <property type="term" value="F:ATP hydrolysis activity"/>
    <property type="evidence" value="ECO:0000318"/>
    <property type="project" value="GO_Central"/>
</dbReference>
<dbReference type="GO" id="GO:0140662">
    <property type="term" value="F:ATP-dependent protein folding chaperone"/>
    <property type="evidence" value="ECO:0007669"/>
    <property type="project" value="InterPro"/>
</dbReference>
<dbReference type="GO" id="GO:0046983">
    <property type="term" value="F:protein dimerization activity"/>
    <property type="evidence" value="ECO:0007669"/>
    <property type="project" value="InterPro"/>
</dbReference>
<dbReference type="GO" id="GO:0051082">
    <property type="term" value="F:unfolded protein binding"/>
    <property type="evidence" value="ECO:0007669"/>
    <property type="project" value="UniProtKB-UniRule"/>
</dbReference>
<dbReference type="GO" id="GO:0008270">
    <property type="term" value="F:zinc ion binding"/>
    <property type="evidence" value="ECO:0007669"/>
    <property type="project" value="InterPro"/>
</dbReference>
<dbReference type="GO" id="GO:0051301">
    <property type="term" value="P:cell division"/>
    <property type="evidence" value="ECO:0000318"/>
    <property type="project" value="GO_Central"/>
</dbReference>
<dbReference type="GO" id="GO:0051603">
    <property type="term" value="P:proteolysis involved in protein catabolic process"/>
    <property type="evidence" value="ECO:0000318"/>
    <property type="project" value="GO_Central"/>
</dbReference>
<dbReference type="CDD" id="cd19497">
    <property type="entry name" value="RecA-like_ClpX"/>
    <property type="match status" value="1"/>
</dbReference>
<dbReference type="FunFam" id="1.10.8.60:FF:000002">
    <property type="entry name" value="ATP-dependent Clp protease ATP-binding subunit ClpX"/>
    <property type="match status" value="1"/>
</dbReference>
<dbReference type="FunFam" id="3.40.50.300:FF:000005">
    <property type="entry name" value="ATP-dependent Clp protease ATP-binding subunit ClpX"/>
    <property type="match status" value="1"/>
</dbReference>
<dbReference type="Gene3D" id="1.10.8.60">
    <property type="match status" value="1"/>
</dbReference>
<dbReference type="Gene3D" id="6.20.220.10">
    <property type="entry name" value="ClpX chaperone, C4-type zinc finger domain"/>
    <property type="match status" value="1"/>
</dbReference>
<dbReference type="Gene3D" id="3.40.50.300">
    <property type="entry name" value="P-loop containing nucleotide triphosphate hydrolases"/>
    <property type="match status" value="1"/>
</dbReference>
<dbReference type="HAMAP" id="MF_00175">
    <property type="entry name" value="ClpX"/>
    <property type="match status" value="1"/>
</dbReference>
<dbReference type="InterPro" id="IPR003593">
    <property type="entry name" value="AAA+_ATPase"/>
</dbReference>
<dbReference type="InterPro" id="IPR050052">
    <property type="entry name" value="ATP-dep_Clp_protease_ClpX"/>
</dbReference>
<dbReference type="InterPro" id="IPR003959">
    <property type="entry name" value="ATPase_AAA_core"/>
</dbReference>
<dbReference type="InterPro" id="IPR019489">
    <property type="entry name" value="Clp_ATPase_C"/>
</dbReference>
<dbReference type="InterPro" id="IPR004487">
    <property type="entry name" value="Clp_protease_ATP-bd_su_ClpX"/>
</dbReference>
<dbReference type="InterPro" id="IPR046425">
    <property type="entry name" value="ClpX_bact"/>
</dbReference>
<dbReference type="InterPro" id="IPR027417">
    <property type="entry name" value="P-loop_NTPase"/>
</dbReference>
<dbReference type="InterPro" id="IPR010603">
    <property type="entry name" value="Znf_CppX_C4"/>
</dbReference>
<dbReference type="InterPro" id="IPR038366">
    <property type="entry name" value="Znf_CppX_C4_sf"/>
</dbReference>
<dbReference type="NCBIfam" id="TIGR00382">
    <property type="entry name" value="clpX"/>
    <property type="match status" value="1"/>
</dbReference>
<dbReference type="NCBIfam" id="NF003745">
    <property type="entry name" value="PRK05342.1"/>
    <property type="match status" value="1"/>
</dbReference>
<dbReference type="PANTHER" id="PTHR48102:SF7">
    <property type="entry name" value="ATP-DEPENDENT CLP PROTEASE ATP-BINDING SUBUNIT CLPX-LIKE, MITOCHONDRIAL"/>
    <property type="match status" value="1"/>
</dbReference>
<dbReference type="PANTHER" id="PTHR48102">
    <property type="entry name" value="ATP-DEPENDENT CLP PROTEASE ATP-BINDING SUBUNIT CLPX-LIKE, MITOCHONDRIAL-RELATED"/>
    <property type="match status" value="1"/>
</dbReference>
<dbReference type="Pfam" id="PF07724">
    <property type="entry name" value="AAA_2"/>
    <property type="match status" value="1"/>
</dbReference>
<dbReference type="Pfam" id="PF10431">
    <property type="entry name" value="ClpB_D2-small"/>
    <property type="match status" value="1"/>
</dbReference>
<dbReference type="Pfam" id="PF06689">
    <property type="entry name" value="zf-C4_ClpX"/>
    <property type="match status" value="1"/>
</dbReference>
<dbReference type="SMART" id="SM00382">
    <property type="entry name" value="AAA"/>
    <property type="match status" value="1"/>
</dbReference>
<dbReference type="SMART" id="SM01086">
    <property type="entry name" value="ClpB_D2-small"/>
    <property type="match status" value="1"/>
</dbReference>
<dbReference type="SMART" id="SM00994">
    <property type="entry name" value="zf-C4_ClpX"/>
    <property type="match status" value="1"/>
</dbReference>
<dbReference type="SUPFAM" id="SSF57716">
    <property type="entry name" value="Glucocorticoid receptor-like (DNA-binding domain)"/>
    <property type="match status" value="1"/>
</dbReference>
<dbReference type="SUPFAM" id="SSF52540">
    <property type="entry name" value="P-loop containing nucleoside triphosphate hydrolases"/>
    <property type="match status" value="1"/>
</dbReference>
<dbReference type="PROSITE" id="PS51902">
    <property type="entry name" value="CLPX_ZB"/>
    <property type="match status" value="1"/>
</dbReference>
<name>CLPX_NEIMB</name>
<comment type="function">
    <text evidence="1">ATP-dependent specificity component of the Clp protease. It directs the protease to specific substrates. Can perform chaperone functions in the absence of ClpP.</text>
</comment>
<comment type="subunit">
    <text evidence="1">Component of the ClpX-ClpP complex. Forms a hexameric ring that, in the presence of ATP, binds to fourteen ClpP subunits assembled into a disk-like structure with a central cavity, resembling the structure of eukaryotic proteasomes.</text>
</comment>
<comment type="similarity">
    <text evidence="1">Belongs to the ClpX chaperone family.</text>
</comment>
<gene>
    <name evidence="1" type="primary">clpX</name>
    <name type="ordered locus">NMB1372</name>
</gene>
<sequence>MSNENRTCSFCGKSKSHVKHLIEGENAFICDECVSNCIEILHEDGNDGTPSESAGGEPEESGKLPTPAEIVANLNDHVIGQEQAKKALAVSVYNHYKRLRHPKAGANVELSKSNILLIGPTGSGKTLLAQSLARKLDVPFVMADATTLTEAGYVGEDVEQIITKLLGKCDFDVEKAQRGIVYIDEIDKISRKSDNPSITRDVSGEGVQQALLKLIEGTVASVPPQGGRKHPNQEFINVDTTNILFICGGAFAGLEKVIRQRTEKGGIGFGASVHSKDENADITKLFGIVEPEDLIKFGLIPELIGRLPVIATLEELDEDALINILTEPKNALVKQYQALFGMENVELEFEEGALRSIARQAMERKTGARGLRSIVERCLLDTMYRLPDLKGLKKVVVGKAVIEEGREPELVFES</sequence>
<protein>
    <recommendedName>
        <fullName evidence="1">ATP-dependent Clp protease ATP-binding subunit ClpX</fullName>
    </recommendedName>
</protein>
<organism>
    <name type="scientific">Neisseria meningitidis serogroup B (strain ATCC BAA-335 / MC58)</name>
    <dbReference type="NCBI Taxonomy" id="122586"/>
    <lineage>
        <taxon>Bacteria</taxon>
        <taxon>Pseudomonadati</taxon>
        <taxon>Pseudomonadota</taxon>
        <taxon>Betaproteobacteria</taxon>
        <taxon>Neisseriales</taxon>
        <taxon>Neisseriaceae</taxon>
        <taxon>Neisseria</taxon>
    </lineage>
</organism>
<proteinExistence type="evidence at protein level"/>